<accession>P0DP67</accession>
<sequence>MSTLKLTLLQQPLVWLDAQANLRHFDMLLESIQQRDVIVLPEMFTTGFAMNAAENALPETEVIDWLRHWSVRTDALIGGSVALNTPDGAVNRFLLVQPDGTILRYDKRHLFRMAGEHHHYLAGKERKVVEWRGWRILPQVCYDLRFPVWSRNQQDYDLALYVANWPAARAKHWQTLLAARAIENQAYVAGCNRVGDDDNGHHYQGNSVILDALGEIQAQAEPGQAAQLDAELSLETLQAYRERFPAFHDTDKFLLL</sequence>
<dbReference type="EC" id="3.5.1.3" evidence="2"/>
<dbReference type="EMBL" id="CP009838">
    <property type="protein sequence ID" value="AJJ26717.1"/>
    <property type="molecule type" value="Genomic_DNA"/>
</dbReference>
<dbReference type="RefSeq" id="WP_005164983.1">
    <property type="nucleotide sequence ID" value="NZ_WJHZ01000042.1"/>
</dbReference>
<dbReference type="SMR" id="P0DP67"/>
<dbReference type="STRING" id="1443113.LC20_01260"/>
<dbReference type="KEGG" id="yet:CH48_2603"/>
<dbReference type="OMA" id="KIHRFGF"/>
<dbReference type="GO" id="GO:0106008">
    <property type="term" value="F:2-oxoglutaramate amidase activity"/>
    <property type="evidence" value="ECO:0007669"/>
    <property type="project" value="TreeGrafter"/>
</dbReference>
<dbReference type="GO" id="GO:0050152">
    <property type="term" value="F:omega-amidase activity"/>
    <property type="evidence" value="ECO:0007669"/>
    <property type="project" value="UniProtKB-EC"/>
</dbReference>
<dbReference type="CDD" id="cd07575">
    <property type="entry name" value="Xc-1258_like"/>
    <property type="match status" value="1"/>
</dbReference>
<dbReference type="FunFam" id="3.60.110.10:FF:000004">
    <property type="entry name" value="Carbon-nitrogen hydrolase"/>
    <property type="match status" value="1"/>
</dbReference>
<dbReference type="Gene3D" id="3.60.110.10">
    <property type="entry name" value="Carbon-nitrogen hydrolase"/>
    <property type="match status" value="1"/>
</dbReference>
<dbReference type="InterPro" id="IPR003010">
    <property type="entry name" value="C-N_Hydrolase"/>
</dbReference>
<dbReference type="InterPro" id="IPR036526">
    <property type="entry name" value="C-N_Hydrolase_sf"/>
</dbReference>
<dbReference type="InterPro" id="IPR052737">
    <property type="entry name" value="Omega-amidase_YafV"/>
</dbReference>
<dbReference type="InterPro" id="IPR001110">
    <property type="entry name" value="UPF0012_CS"/>
</dbReference>
<dbReference type="NCBIfam" id="NF007757">
    <property type="entry name" value="PRK10438.1"/>
    <property type="match status" value="1"/>
</dbReference>
<dbReference type="PANTHER" id="PTHR47799">
    <property type="entry name" value="OMEGA-AMIDASE YAFV"/>
    <property type="match status" value="1"/>
</dbReference>
<dbReference type="PANTHER" id="PTHR47799:SF1">
    <property type="entry name" value="OMEGA-AMIDASE YAFV"/>
    <property type="match status" value="1"/>
</dbReference>
<dbReference type="Pfam" id="PF00795">
    <property type="entry name" value="CN_hydrolase"/>
    <property type="match status" value="1"/>
</dbReference>
<dbReference type="SUPFAM" id="SSF56317">
    <property type="entry name" value="Carbon-nitrogen hydrolase"/>
    <property type="match status" value="1"/>
</dbReference>
<dbReference type="PROSITE" id="PS50263">
    <property type="entry name" value="CN_HYDROLASE"/>
    <property type="match status" value="1"/>
</dbReference>
<dbReference type="PROSITE" id="PS01227">
    <property type="entry name" value="UPF0012"/>
    <property type="match status" value="1"/>
</dbReference>
<protein>
    <recommendedName>
        <fullName>Omega-amidase YafV</fullName>
        <shortName evidence="3">yeYafV</shortName>
        <ecNumber evidence="2">3.5.1.3</ecNumber>
    </recommendedName>
</protein>
<reference key="1">
    <citation type="submission" date="2014-11" db="EMBL/GenBank/DDBJ databases">
        <authorList>
            <person name="Davenport K.W."/>
            <person name="Bishop-Lilly K.A."/>
            <person name="Broomall S.M."/>
            <person name="Chain P.S."/>
            <person name="Chertkov O."/>
            <person name="Coyne S.R."/>
            <person name="Daligault H.E."/>
            <person name="Erkkila T."/>
            <person name="Frey K.G."/>
            <person name="Gibbons H.S."/>
            <person name="Gu W."/>
            <person name="Jaissle J."/>
            <person name="Johnson S.L."/>
            <person name="Koroleva G.I."/>
            <person name="Ladner J.T."/>
            <person name="Lo C.-C."/>
            <person name="Minogue T.D."/>
            <person name="Munk C."/>
            <person name="Palacios G.F."/>
            <person name="Redden C.L."/>
            <person name="Rosenzweig C.N."/>
            <person name="Scholz M.B."/>
            <person name="Teshima H."/>
            <person name="Xu Y."/>
        </authorList>
    </citation>
    <scope>NUCLEOTIDE SEQUENCE [LARGE SCALE GENOMIC DNA]</scope>
    <source>
        <strain>2516-87</strain>
    </source>
</reference>
<reference key="2">
    <citation type="journal article" date="2017" name="Proc. Natl. Acad. Sci. U.S.A.">
        <title>Nit1 is a metabolite repair enzyme that hydrolyzes deaminated glutathione.</title>
        <authorList>
            <person name="Peracchi A."/>
            <person name="Veiga-da-Cunha M."/>
            <person name="Kuhara T."/>
            <person name="Ellens K.W."/>
            <person name="Paczia N."/>
            <person name="Stroobant V."/>
            <person name="Seliga A.K."/>
            <person name="Marlaire S."/>
            <person name="Jaisson S."/>
            <person name="Bommer G.T."/>
            <person name="Sun J."/>
            <person name="Huebner K."/>
            <person name="Linster C.L."/>
            <person name="Cooper A.J.L."/>
            <person name="Van Schaftingen E."/>
        </authorList>
    </citation>
    <scope>FUNCTION</scope>
    <source>
        <strain>2516-87</strain>
    </source>
</reference>
<gene>
    <name evidence="3" type="primary">yafV</name>
    <name type="ORF">CH48_2603</name>
</gene>
<organism>
    <name type="scientific">Yersinia enterocolitica</name>
    <dbReference type="NCBI Taxonomy" id="630"/>
    <lineage>
        <taxon>Bacteria</taxon>
        <taxon>Pseudomonadati</taxon>
        <taxon>Pseudomonadota</taxon>
        <taxon>Gammaproteobacteria</taxon>
        <taxon>Enterobacterales</taxon>
        <taxon>Yersiniaceae</taxon>
        <taxon>Yersinia</taxon>
    </lineage>
</organism>
<name>YAFV_YEREN</name>
<feature type="chain" id="PRO_0000440698" description="Omega-amidase YafV">
    <location>
        <begin position="1"/>
        <end position="256"/>
    </location>
</feature>
<feature type="domain" description="CN hydrolase" evidence="1">
    <location>
        <begin position="4"/>
        <end position="234"/>
    </location>
</feature>
<feature type="active site" description="Proton acceptor" evidence="1">
    <location>
        <position position="42"/>
    </location>
</feature>
<feature type="active site" evidence="1">
    <location>
        <position position="107"/>
    </location>
</feature>
<feature type="active site" description="Nucleophile" evidence="1">
    <location>
        <position position="141"/>
    </location>
</feature>
<proteinExistence type="inferred from homology"/>
<comment type="function">
    <text evidence="2">Hydrolyzes alpha-ketoglutaramate (a-KGM) to alpha-ketoglutarate (alpha-KG) and ammonia (specific activity 21 umol/min/mg), has very weak activity on L-glutamine, and no activity on deaminated glutathione (dGSH) or glutathione. May function as a metabolite repair enzyme.</text>
</comment>
<comment type="catalytic activity">
    <reaction evidence="2">
        <text>a monoamide of a dicarboxylate + H2O = a dicarboxylate + NH4(+)</text>
        <dbReference type="Rhea" id="RHEA:11716"/>
        <dbReference type="ChEBI" id="CHEBI:15377"/>
        <dbReference type="ChEBI" id="CHEBI:28938"/>
        <dbReference type="ChEBI" id="CHEBI:28965"/>
        <dbReference type="ChEBI" id="CHEBI:77450"/>
        <dbReference type="EC" id="3.5.1.3"/>
    </reaction>
</comment>
<comment type="similarity">
    <text evidence="4">Belongs to the carbon-nitrogen hydrolase superfamily. NIT1/NIT2 family.</text>
</comment>
<evidence type="ECO:0000255" key="1">
    <source>
        <dbReference type="PROSITE-ProRule" id="PRU00054"/>
    </source>
</evidence>
<evidence type="ECO:0000269" key="2">
    <source>
    </source>
</evidence>
<evidence type="ECO:0000303" key="3">
    <source>
    </source>
</evidence>
<evidence type="ECO:0000305" key="4"/>
<keyword id="KW-0378">Hydrolase</keyword>